<organism>
    <name type="scientific">Arabidopsis thaliana</name>
    <name type="common">Mouse-ear cress</name>
    <dbReference type="NCBI Taxonomy" id="3702"/>
    <lineage>
        <taxon>Eukaryota</taxon>
        <taxon>Viridiplantae</taxon>
        <taxon>Streptophyta</taxon>
        <taxon>Embryophyta</taxon>
        <taxon>Tracheophyta</taxon>
        <taxon>Spermatophyta</taxon>
        <taxon>Magnoliopsida</taxon>
        <taxon>eudicotyledons</taxon>
        <taxon>Gunneridae</taxon>
        <taxon>Pentapetalae</taxon>
        <taxon>rosids</taxon>
        <taxon>malvids</taxon>
        <taxon>Brassicales</taxon>
        <taxon>Brassicaceae</taxon>
        <taxon>Camelineae</taxon>
        <taxon>Arabidopsis</taxon>
    </lineage>
</organism>
<feature type="chain" id="PRO_0000322142" description="U-box domain-containing protein 35">
    <location>
        <begin position="1"/>
        <end position="835"/>
    </location>
</feature>
<feature type="domain" description="Protein kinase" evidence="3">
    <location>
        <begin position="480"/>
        <end position="745"/>
    </location>
</feature>
<feature type="domain" description="U-box">
    <location>
        <begin position="765"/>
        <end position="835"/>
    </location>
</feature>
<feature type="region of interest" description="Disordered" evidence="5">
    <location>
        <begin position="1"/>
        <end position="22"/>
    </location>
</feature>
<feature type="region of interest" description="Disordered" evidence="5">
    <location>
        <begin position="177"/>
        <end position="303"/>
    </location>
</feature>
<feature type="region of interest" description="Disordered" evidence="5">
    <location>
        <begin position="410"/>
        <end position="457"/>
    </location>
</feature>
<feature type="coiled-coil region" evidence="2">
    <location>
        <begin position="340"/>
        <end position="459"/>
    </location>
</feature>
<feature type="compositionally biased region" description="Pro residues" evidence="5">
    <location>
        <begin position="10"/>
        <end position="19"/>
    </location>
</feature>
<feature type="compositionally biased region" description="Low complexity" evidence="5">
    <location>
        <begin position="195"/>
        <end position="218"/>
    </location>
</feature>
<feature type="compositionally biased region" description="Polar residues" evidence="5">
    <location>
        <begin position="269"/>
        <end position="282"/>
    </location>
</feature>
<feature type="compositionally biased region" description="Basic and acidic residues" evidence="5">
    <location>
        <begin position="285"/>
        <end position="295"/>
    </location>
</feature>
<feature type="compositionally biased region" description="Basic and acidic residues" evidence="5">
    <location>
        <begin position="410"/>
        <end position="455"/>
    </location>
</feature>
<feature type="active site" description="Proton acceptor" evidence="3 4">
    <location>
        <position position="602"/>
    </location>
</feature>
<feature type="binding site" evidence="3">
    <location>
        <begin position="486"/>
        <end position="494"/>
    </location>
    <ligand>
        <name>ATP</name>
        <dbReference type="ChEBI" id="CHEBI:30616"/>
    </ligand>
</feature>
<feature type="binding site" evidence="3">
    <location>
        <position position="507"/>
    </location>
    <ligand>
        <name>ATP</name>
        <dbReference type="ChEBI" id="CHEBI:30616"/>
    </ligand>
</feature>
<name>PUB35_ARATH</name>
<keyword id="KW-0067">ATP-binding</keyword>
<keyword id="KW-0175">Coiled coil</keyword>
<keyword id="KW-0418">Kinase</keyword>
<keyword id="KW-0547">Nucleotide-binding</keyword>
<keyword id="KW-1185">Reference proteome</keyword>
<keyword id="KW-0723">Serine/threonine-protein kinase</keyword>
<keyword id="KW-0808">Transferase</keyword>
<keyword id="KW-0833">Ubl conjugation pathway</keyword>
<comment type="function">
    <text evidence="1">Functions as an E3 ubiquitin ligase.</text>
</comment>
<comment type="catalytic activity">
    <reaction>
        <text>L-seryl-[protein] + ATP = O-phospho-L-seryl-[protein] + ADP + H(+)</text>
        <dbReference type="Rhea" id="RHEA:17989"/>
        <dbReference type="Rhea" id="RHEA-COMP:9863"/>
        <dbReference type="Rhea" id="RHEA-COMP:11604"/>
        <dbReference type="ChEBI" id="CHEBI:15378"/>
        <dbReference type="ChEBI" id="CHEBI:29999"/>
        <dbReference type="ChEBI" id="CHEBI:30616"/>
        <dbReference type="ChEBI" id="CHEBI:83421"/>
        <dbReference type="ChEBI" id="CHEBI:456216"/>
    </reaction>
</comment>
<comment type="catalytic activity">
    <reaction>
        <text>L-threonyl-[protein] + ATP = O-phospho-L-threonyl-[protein] + ADP + H(+)</text>
        <dbReference type="Rhea" id="RHEA:46608"/>
        <dbReference type="Rhea" id="RHEA-COMP:11060"/>
        <dbReference type="Rhea" id="RHEA-COMP:11605"/>
        <dbReference type="ChEBI" id="CHEBI:15378"/>
        <dbReference type="ChEBI" id="CHEBI:30013"/>
        <dbReference type="ChEBI" id="CHEBI:30616"/>
        <dbReference type="ChEBI" id="CHEBI:61977"/>
        <dbReference type="ChEBI" id="CHEBI:456216"/>
    </reaction>
</comment>
<comment type="catalytic activity">
    <reaction>
        <text>S-ubiquitinyl-[E2 ubiquitin-conjugating enzyme]-L-cysteine + [acceptor protein]-L-lysine = [E2 ubiquitin-conjugating enzyme]-L-cysteine + N(6)-ubiquitinyl-[acceptor protein]-L-lysine.</text>
        <dbReference type="EC" id="2.3.2.27"/>
    </reaction>
</comment>
<comment type="pathway">
    <text>Protein modification; protein ubiquitination.</text>
</comment>
<comment type="similarity">
    <text evidence="3">Belongs to the protein kinase superfamily. Ser/Thr protein kinase family.</text>
</comment>
<comment type="sequence caution" evidence="6">
    <conflict type="frameshift">
        <sequence resource="EMBL" id="BX828107"/>
    </conflict>
</comment>
<comment type="sequence caution" evidence="6">
    <conflict type="erroneous gene model prediction">
        <sequence resource="EMBL-CDS" id="CAB36758"/>
    </conflict>
</comment>
<comment type="sequence caution" evidence="6">
    <conflict type="erroneous gene model prediction">
        <sequence resource="EMBL-CDS" id="CAB79425"/>
    </conflict>
</comment>
<sequence>MSRSPDKLALPPPPPPPPSRTVVVALSGSSKSKYVVTWAIEKFATEGNVGFKLLHIHPMITSVPTPMGNAIPISEVRDDVVTAYRQEILWQSEEMLKPYTKLFVRRKVAVEVLVIESDNVAAAIAEEVTRDSIDRIVIGGSSRSFFSRKADICSVISALMPNFCTVYVVSKGKLSCVRPSDSDGNATIREDGSERTNSSSGSSGPTSDSSDVMSSAHDSQSRPLSLPVRRMQHFPAIAGQASVPMETSSVGSDETRCMSLDAEEARDVSSINRSSTDTTSRWTPRRRDYEERKEAMSSSSSNREYGNFGTRFSWSGMGVDTTHSRASQQASNMSDALSEQSYTDNQVNLNFEVEKLRAELRHVQEMYAVAQTETFDASRKLGELNQRRLEEAIKLEELKLKEYEARELAEKEKQNFEKARRDAESMRERAEREIAQRREAERKSARDTKEKEKLEGTLGSPQLQYQHFAWEEIMAATSSFSEELKIGMGAYGAVYKCNLHHTTAVVKVLQSAENQLSKQFQQELEILSKIRHPHLVLLLGACPEQGALVYEYMENGSLEDRLFQVNNSPPLPWFERFRIAWEVAAALVFLHKSKPKPIIHRDLKPANILLDHNFVSKVGDVGLSTMVQVDPLSTKFTIYKQTSPVGTLCYIDPEYQRTGRISSKSDIYSFGMILLQLLTAKPAIALTHFVESAMDSNDEFLKILDQKAGNWPIEETRELAALALCCTELRGKDRPDLKDQILPALENLKKVAEKARNSFSGVSTQPPTHFICPLLKDVMNEPCVAADGYTYDRHAIEEWLKEHNTSPMTDSPLHSKNLLPNYTLYTAIMEWRSTR</sequence>
<evidence type="ECO:0000250" key="1"/>
<evidence type="ECO:0000255" key="2"/>
<evidence type="ECO:0000255" key="3">
    <source>
        <dbReference type="PROSITE-ProRule" id="PRU00159"/>
    </source>
</evidence>
<evidence type="ECO:0000255" key="4">
    <source>
        <dbReference type="PROSITE-ProRule" id="PRU10027"/>
    </source>
</evidence>
<evidence type="ECO:0000256" key="5">
    <source>
        <dbReference type="SAM" id="MobiDB-lite"/>
    </source>
</evidence>
<evidence type="ECO:0000305" key="6"/>
<dbReference type="EC" id="2.3.2.27"/>
<dbReference type="EC" id="2.7.11.-"/>
<dbReference type="EMBL" id="AL035396">
    <property type="status" value="NOT_ANNOTATED_CDS"/>
    <property type="molecule type" value="Genomic_DNA"/>
</dbReference>
<dbReference type="EMBL" id="AL035523">
    <property type="protein sequence ID" value="CAB36758.1"/>
    <property type="status" value="ALT_SEQ"/>
    <property type="molecule type" value="Genomic_DNA"/>
</dbReference>
<dbReference type="EMBL" id="AL161562">
    <property type="protein sequence ID" value="CAB79425.1"/>
    <property type="status" value="ALT_SEQ"/>
    <property type="molecule type" value="Genomic_DNA"/>
</dbReference>
<dbReference type="EMBL" id="CP002687">
    <property type="protein sequence ID" value="AEE85018.1"/>
    <property type="molecule type" value="Genomic_DNA"/>
</dbReference>
<dbReference type="EMBL" id="BX828107">
    <property type="status" value="NOT_ANNOTATED_CDS"/>
    <property type="molecule type" value="mRNA"/>
</dbReference>
<dbReference type="PIR" id="T05537">
    <property type="entry name" value="T05537"/>
</dbReference>
<dbReference type="RefSeq" id="NP_194246.2">
    <property type="nucleotide sequence ID" value="NM_118648.5"/>
</dbReference>
<dbReference type="SMR" id="Q9SW11"/>
<dbReference type="BioGRID" id="13906">
    <property type="interactions" value="32"/>
</dbReference>
<dbReference type="FunCoup" id="Q9SW11">
    <property type="interactions" value="17"/>
</dbReference>
<dbReference type="STRING" id="3702.Q9SW11"/>
<dbReference type="GlyGen" id="Q9SW11">
    <property type="glycosylation" value="1 site"/>
</dbReference>
<dbReference type="PaxDb" id="3702-AT4G25160.1"/>
<dbReference type="ProteomicsDB" id="226065"/>
<dbReference type="EnsemblPlants" id="AT4G25160.1">
    <property type="protein sequence ID" value="AT4G25160.1"/>
    <property type="gene ID" value="AT4G25160"/>
</dbReference>
<dbReference type="GeneID" id="828619"/>
<dbReference type="Gramene" id="AT4G25160.1">
    <property type="protein sequence ID" value="AT4G25160.1"/>
    <property type="gene ID" value="AT4G25160"/>
</dbReference>
<dbReference type="KEGG" id="ath:AT4G25160"/>
<dbReference type="Araport" id="AT4G25160"/>
<dbReference type="TAIR" id="AT4G25160">
    <property type="gene designation" value="PUB35"/>
</dbReference>
<dbReference type="eggNOG" id="ENOG502QQ92">
    <property type="taxonomic scope" value="Eukaryota"/>
</dbReference>
<dbReference type="HOGENOM" id="CLU_000288_153_1_1"/>
<dbReference type="InParanoid" id="Q9SW11"/>
<dbReference type="OMA" id="DTTHSRA"/>
<dbReference type="PhylomeDB" id="Q9SW11"/>
<dbReference type="UniPathway" id="UPA00143"/>
<dbReference type="PRO" id="PR:Q9SW11"/>
<dbReference type="Proteomes" id="UP000006548">
    <property type="component" value="Chromosome 4"/>
</dbReference>
<dbReference type="ExpressionAtlas" id="Q9SW11">
    <property type="expression patterns" value="baseline and differential"/>
</dbReference>
<dbReference type="GO" id="GO:0005524">
    <property type="term" value="F:ATP binding"/>
    <property type="evidence" value="ECO:0007669"/>
    <property type="project" value="UniProtKB-KW"/>
</dbReference>
<dbReference type="GO" id="GO:0106310">
    <property type="term" value="F:protein serine kinase activity"/>
    <property type="evidence" value="ECO:0007669"/>
    <property type="project" value="RHEA"/>
</dbReference>
<dbReference type="GO" id="GO:0004674">
    <property type="term" value="F:protein serine/threonine kinase activity"/>
    <property type="evidence" value="ECO:0007669"/>
    <property type="project" value="UniProtKB-KW"/>
</dbReference>
<dbReference type="GO" id="GO:0004842">
    <property type="term" value="F:ubiquitin-protein transferase activity"/>
    <property type="evidence" value="ECO:0007669"/>
    <property type="project" value="InterPro"/>
</dbReference>
<dbReference type="GO" id="GO:0016567">
    <property type="term" value="P:protein ubiquitination"/>
    <property type="evidence" value="ECO:0007669"/>
    <property type="project" value="UniProtKB-UniPathway"/>
</dbReference>
<dbReference type="CDD" id="cd16655">
    <property type="entry name" value="RING-Ubox_WDSUB1-like"/>
    <property type="match status" value="1"/>
</dbReference>
<dbReference type="CDD" id="cd01989">
    <property type="entry name" value="USP_STK_Ubox_N"/>
    <property type="match status" value="1"/>
</dbReference>
<dbReference type="Gene3D" id="3.40.50.620">
    <property type="entry name" value="HUPs"/>
    <property type="match status" value="1"/>
</dbReference>
<dbReference type="Gene3D" id="3.30.200.20">
    <property type="entry name" value="Phosphorylase Kinase, domain 1"/>
    <property type="match status" value="1"/>
</dbReference>
<dbReference type="Gene3D" id="1.10.510.10">
    <property type="entry name" value="Transferase(Phosphotransferase) domain 1"/>
    <property type="match status" value="1"/>
</dbReference>
<dbReference type="Gene3D" id="3.30.40.10">
    <property type="entry name" value="Zinc/RING finger domain, C3HC4 (zinc finger)"/>
    <property type="match status" value="1"/>
</dbReference>
<dbReference type="InterPro" id="IPR011009">
    <property type="entry name" value="Kinase-like_dom_sf"/>
</dbReference>
<dbReference type="InterPro" id="IPR000719">
    <property type="entry name" value="Prot_kinase_dom"/>
</dbReference>
<dbReference type="InterPro" id="IPR017441">
    <property type="entry name" value="Protein_kinase_ATP_BS"/>
</dbReference>
<dbReference type="InterPro" id="IPR014729">
    <property type="entry name" value="Rossmann-like_a/b/a_fold"/>
</dbReference>
<dbReference type="InterPro" id="IPR001245">
    <property type="entry name" value="Ser-Thr/Tyr_kinase_cat_dom"/>
</dbReference>
<dbReference type="InterPro" id="IPR008271">
    <property type="entry name" value="Ser/Thr_kinase_AS"/>
</dbReference>
<dbReference type="InterPro" id="IPR051348">
    <property type="entry name" value="U-box_ubiquitin_ligases"/>
</dbReference>
<dbReference type="InterPro" id="IPR003613">
    <property type="entry name" value="Ubox_domain"/>
</dbReference>
<dbReference type="InterPro" id="IPR006016">
    <property type="entry name" value="UspA"/>
</dbReference>
<dbReference type="InterPro" id="IPR013083">
    <property type="entry name" value="Znf_RING/FYVE/PHD"/>
</dbReference>
<dbReference type="PANTHER" id="PTHR45647">
    <property type="entry name" value="OS02G0152300 PROTEIN"/>
    <property type="match status" value="1"/>
</dbReference>
<dbReference type="PANTHER" id="PTHR45647:SF15">
    <property type="entry name" value="U-BOX DOMAIN-CONTAINING PROTEIN 35"/>
    <property type="match status" value="1"/>
</dbReference>
<dbReference type="Pfam" id="PF07714">
    <property type="entry name" value="PK_Tyr_Ser-Thr"/>
    <property type="match status" value="1"/>
</dbReference>
<dbReference type="Pfam" id="PF04564">
    <property type="entry name" value="U-box"/>
    <property type="match status" value="1"/>
</dbReference>
<dbReference type="Pfam" id="PF00582">
    <property type="entry name" value="Usp"/>
    <property type="match status" value="1"/>
</dbReference>
<dbReference type="SMART" id="SM00220">
    <property type="entry name" value="S_TKc"/>
    <property type="match status" value="1"/>
</dbReference>
<dbReference type="SMART" id="SM00504">
    <property type="entry name" value="Ubox"/>
    <property type="match status" value="1"/>
</dbReference>
<dbReference type="SUPFAM" id="SSF52402">
    <property type="entry name" value="Adenine nucleotide alpha hydrolases-like"/>
    <property type="match status" value="1"/>
</dbReference>
<dbReference type="SUPFAM" id="SSF56112">
    <property type="entry name" value="Protein kinase-like (PK-like)"/>
    <property type="match status" value="1"/>
</dbReference>
<dbReference type="SUPFAM" id="SSF57850">
    <property type="entry name" value="RING/U-box"/>
    <property type="match status" value="1"/>
</dbReference>
<dbReference type="PROSITE" id="PS00107">
    <property type="entry name" value="PROTEIN_KINASE_ATP"/>
    <property type="match status" value="1"/>
</dbReference>
<dbReference type="PROSITE" id="PS50011">
    <property type="entry name" value="PROTEIN_KINASE_DOM"/>
    <property type="match status" value="1"/>
</dbReference>
<dbReference type="PROSITE" id="PS00108">
    <property type="entry name" value="PROTEIN_KINASE_ST"/>
    <property type="match status" value="1"/>
</dbReference>
<dbReference type="PROSITE" id="PS51698">
    <property type="entry name" value="U_BOX"/>
    <property type="match status" value="1"/>
</dbReference>
<proteinExistence type="evidence at transcript level"/>
<accession>Q9SW11</accession>
<gene>
    <name type="primary">PUB35</name>
    <name type="ordered locus">At4g25160</name>
    <name type="ORF">F13M23.300</name>
    <name type="ORF">F24A6.13</name>
</gene>
<protein>
    <recommendedName>
        <fullName>U-box domain-containing protein 35</fullName>
    </recommendedName>
    <alternativeName>
        <fullName>Plant U-box protein 35</fullName>
    </alternativeName>
    <domain>
        <recommendedName>
            <fullName>E3 ubiquitin ligase</fullName>
            <ecNumber>2.3.2.27</ecNumber>
        </recommendedName>
        <alternativeName>
            <fullName evidence="6">RING-type E3 ubiquitin transferase</fullName>
        </alternativeName>
    </domain>
    <domain>
        <recommendedName>
            <fullName>Serine/threonine-protein kinase</fullName>
            <ecNumber>2.7.11.-</ecNumber>
        </recommendedName>
    </domain>
</protein>
<reference key="1">
    <citation type="journal article" date="1999" name="Nature">
        <title>Sequence and analysis of chromosome 4 of the plant Arabidopsis thaliana.</title>
        <authorList>
            <person name="Mayer K.F.X."/>
            <person name="Schueller C."/>
            <person name="Wambutt R."/>
            <person name="Murphy G."/>
            <person name="Volckaert G."/>
            <person name="Pohl T."/>
            <person name="Duesterhoeft A."/>
            <person name="Stiekema W."/>
            <person name="Entian K.-D."/>
            <person name="Terryn N."/>
            <person name="Harris B."/>
            <person name="Ansorge W."/>
            <person name="Brandt P."/>
            <person name="Grivell L.A."/>
            <person name="Rieger M."/>
            <person name="Weichselgartner M."/>
            <person name="de Simone V."/>
            <person name="Obermaier B."/>
            <person name="Mache R."/>
            <person name="Mueller M."/>
            <person name="Kreis M."/>
            <person name="Delseny M."/>
            <person name="Puigdomenech P."/>
            <person name="Watson M."/>
            <person name="Schmidtheini T."/>
            <person name="Reichert B."/>
            <person name="Portetelle D."/>
            <person name="Perez-Alonso M."/>
            <person name="Boutry M."/>
            <person name="Bancroft I."/>
            <person name="Vos P."/>
            <person name="Hoheisel J."/>
            <person name="Zimmermann W."/>
            <person name="Wedler H."/>
            <person name="Ridley P."/>
            <person name="Langham S.-A."/>
            <person name="McCullagh B."/>
            <person name="Bilham L."/>
            <person name="Robben J."/>
            <person name="van der Schueren J."/>
            <person name="Grymonprez B."/>
            <person name="Chuang Y.-J."/>
            <person name="Vandenbussche F."/>
            <person name="Braeken M."/>
            <person name="Weltjens I."/>
            <person name="Voet M."/>
            <person name="Bastiaens I."/>
            <person name="Aert R."/>
            <person name="Defoor E."/>
            <person name="Weitzenegger T."/>
            <person name="Bothe G."/>
            <person name="Ramsperger U."/>
            <person name="Hilbert H."/>
            <person name="Braun M."/>
            <person name="Holzer E."/>
            <person name="Brandt A."/>
            <person name="Peters S."/>
            <person name="van Staveren M."/>
            <person name="Dirkse W."/>
            <person name="Mooijman P."/>
            <person name="Klein Lankhorst R."/>
            <person name="Rose M."/>
            <person name="Hauf J."/>
            <person name="Koetter P."/>
            <person name="Berneiser S."/>
            <person name="Hempel S."/>
            <person name="Feldpausch M."/>
            <person name="Lamberth S."/>
            <person name="Van den Daele H."/>
            <person name="De Keyser A."/>
            <person name="Buysshaert C."/>
            <person name="Gielen J."/>
            <person name="Villarroel R."/>
            <person name="De Clercq R."/>
            <person name="van Montagu M."/>
            <person name="Rogers J."/>
            <person name="Cronin A."/>
            <person name="Quail M.A."/>
            <person name="Bray-Allen S."/>
            <person name="Clark L."/>
            <person name="Doggett J."/>
            <person name="Hall S."/>
            <person name="Kay M."/>
            <person name="Lennard N."/>
            <person name="McLay K."/>
            <person name="Mayes R."/>
            <person name="Pettett A."/>
            <person name="Rajandream M.A."/>
            <person name="Lyne M."/>
            <person name="Benes V."/>
            <person name="Rechmann S."/>
            <person name="Borkova D."/>
            <person name="Bloecker H."/>
            <person name="Scharfe M."/>
            <person name="Grimm M."/>
            <person name="Loehnert T.-H."/>
            <person name="Dose S."/>
            <person name="de Haan M."/>
            <person name="Maarse A.C."/>
            <person name="Schaefer M."/>
            <person name="Mueller-Auer S."/>
            <person name="Gabel C."/>
            <person name="Fuchs M."/>
            <person name="Fartmann B."/>
            <person name="Granderath K."/>
            <person name="Dauner D."/>
            <person name="Herzl A."/>
            <person name="Neumann S."/>
            <person name="Argiriou A."/>
            <person name="Vitale D."/>
            <person name="Liguori R."/>
            <person name="Piravandi E."/>
            <person name="Massenet O."/>
            <person name="Quigley F."/>
            <person name="Clabauld G."/>
            <person name="Muendlein A."/>
            <person name="Felber R."/>
            <person name="Schnabl S."/>
            <person name="Hiller R."/>
            <person name="Schmidt W."/>
            <person name="Lecharny A."/>
            <person name="Aubourg S."/>
            <person name="Chefdor F."/>
            <person name="Cooke R."/>
            <person name="Berger C."/>
            <person name="Monfort A."/>
            <person name="Casacuberta E."/>
            <person name="Gibbons T."/>
            <person name="Weber N."/>
            <person name="Vandenbol M."/>
            <person name="Bargues M."/>
            <person name="Terol J."/>
            <person name="Torres A."/>
            <person name="Perez-Perez A."/>
            <person name="Purnelle B."/>
            <person name="Bent E."/>
            <person name="Johnson S."/>
            <person name="Tacon D."/>
            <person name="Jesse T."/>
            <person name="Heijnen L."/>
            <person name="Schwarz S."/>
            <person name="Scholler P."/>
            <person name="Heber S."/>
            <person name="Francs P."/>
            <person name="Bielke C."/>
            <person name="Frishman D."/>
            <person name="Haase D."/>
            <person name="Lemcke K."/>
            <person name="Mewes H.-W."/>
            <person name="Stocker S."/>
            <person name="Zaccaria P."/>
            <person name="Bevan M."/>
            <person name="Wilson R.K."/>
            <person name="de la Bastide M."/>
            <person name="Habermann K."/>
            <person name="Parnell L."/>
            <person name="Dedhia N."/>
            <person name="Gnoj L."/>
            <person name="Schutz K."/>
            <person name="Huang E."/>
            <person name="Spiegel L."/>
            <person name="Sekhon M."/>
            <person name="Murray J."/>
            <person name="Sheet P."/>
            <person name="Cordes M."/>
            <person name="Abu-Threideh J."/>
            <person name="Stoneking T."/>
            <person name="Kalicki J."/>
            <person name="Graves T."/>
            <person name="Harmon G."/>
            <person name="Edwards J."/>
            <person name="Latreille P."/>
            <person name="Courtney L."/>
            <person name="Cloud J."/>
            <person name="Abbott A."/>
            <person name="Scott K."/>
            <person name="Johnson D."/>
            <person name="Minx P."/>
            <person name="Bentley D."/>
            <person name="Fulton B."/>
            <person name="Miller N."/>
            <person name="Greco T."/>
            <person name="Kemp K."/>
            <person name="Kramer J."/>
            <person name="Fulton L."/>
            <person name="Mardis E."/>
            <person name="Dante M."/>
            <person name="Pepin K."/>
            <person name="Hillier L.W."/>
            <person name="Nelson J."/>
            <person name="Spieth J."/>
            <person name="Ryan E."/>
            <person name="Andrews S."/>
            <person name="Geisel C."/>
            <person name="Layman D."/>
            <person name="Du H."/>
            <person name="Ali J."/>
            <person name="Berghoff A."/>
            <person name="Jones K."/>
            <person name="Drone K."/>
            <person name="Cotton M."/>
            <person name="Joshu C."/>
            <person name="Antonoiu B."/>
            <person name="Zidanic M."/>
            <person name="Strong C."/>
            <person name="Sun H."/>
            <person name="Lamar B."/>
            <person name="Yordan C."/>
            <person name="Ma P."/>
            <person name="Zhong J."/>
            <person name="Preston R."/>
            <person name="Vil D."/>
            <person name="Shekher M."/>
            <person name="Matero A."/>
            <person name="Shah R."/>
            <person name="Swaby I.K."/>
            <person name="O'Shaughnessy A."/>
            <person name="Rodriguez M."/>
            <person name="Hoffman J."/>
            <person name="Till S."/>
            <person name="Granat S."/>
            <person name="Shohdy N."/>
            <person name="Hasegawa A."/>
            <person name="Hameed A."/>
            <person name="Lodhi M."/>
            <person name="Johnson A."/>
            <person name="Chen E."/>
            <person name="Marra M.A."/>
            <person name="Martienssen R."/>
            <person name="McCombie W.R."/>
        </authorList>
    </citation>
    <scope>NUCLEOTIDE SEQUENCE [LARGE SCALE GENOMIC DNA]</scope>
    <source>
        <strain>cv. Columbia</strain>
    </source>
</reference>
<reference key="2">
    <citation type="journal article" date="2017" name="Plant J.">
        <title>Araport11: a complete reannotation of the Arabidopsis thaliana reference genome.</title>
        <authorList>
            <person name="Cheng C.Y."/>
            <person name="Krishnakumar V."/>
            <person name="Chan A.P."/>
            <person name="Thibaud-Nissen F."/>
            <person name="Schobel S."/>
            <person name="Town C.D."/>
        </authorList>
    </citation>
    <scope>GENOME REANNOTATION</scope>
    <source>
        <strain>cv. Columbia</strain>
    </source>
</reference>
<reference key="3">
    <citation type="journal article" date="2004" name="Genome Res.">
        <title>Whole genome sequence comparisons and 'full-length' cDNA sequences: a combined approach to evaluate and improve Arabidopsis genome annotation.</title>
        <authorList>
            <person name="Castelli V."/>
            <person name="Aury J.-M."/>
            <person name="Jaillon O."/>
            <person name="Wincker P."/>
            <person name="Clepet C."/>
            <person name="Menard M."/>
            <person name="Cruaud C."/>
            <person name="Quetier F."/>
            <person name="Scarpelli C."/>
            <person name="Schaechter V."/>
            <person name="Temple G."/>
            <person name="Caboche M."/>
            <person name="Weissenbach J."/>
            <person name="Salanoubat M."/>
        </authorList>
    </citation>
    <scope>NUCLEOTIDE SEQUENCE [LARGE SCALE MRNA]</scope>
    <source>
        <strain>cv. Columbia</strain>
    </source>
</reference>
<reference key="4">
    <citation type="journal article" date="2001" name="Trends Plant Sci.">
        <title>The U-box protein family in plants.</title>
        <authorList>
            <person name="Azevedo C."/>
            <person name="Santos-Rosa M.J."/>
            <person name="Shirasu K."/>
        </authorList>
    </citation>
    <scope>GENE FAMILY ORGANIZATION</scope>
    <scope>NOMENCLATURE</scope>
</reference>